<feature type="chain" id="PRO_0000373954" description="WD repeat-containing protein 55">
    <location>
        <begin position="1"/>
        <end position="384"/>
    </location>
</feature>
<feature type="repeat" description="WD 1">
    <location>
        <begin position="36"/>
        <end position="75"/>
    </location>
</feature>
<feature type="repeat" description="WD 2">
    <location>
        <begin position="82"/>
        <end position="121"/>
    </location>
</feature>
<feature type="repeat" description="WD 3">
    <location>
        <begin position="125"/>
        <end position="163"/>
    </location>
</feature>
<feature type="repeat" description="WD 4">
    <location>
        <begin position="166"/>
        <end position="205"/>
    </location>
</feature>
<feature type="repeat" description="WD 5">
    <location>
        <begin position="208"/>
        <end position="247"/>
    </location>
</feature>
<feature type="repeat" description="WD 6">
    <location>
        <begin position="250"/>
        <end position="289"/>
    </location>
</feature>
<feature type="repeat" description="WD 7">
    <location>
        <begin position="293"/>
        <end position="332"/>
    </location>
</feature>
<feature type="region of interest" description="Disordered" evidence="3">
    <location>
        <begin position="1"/>
        <end position="33"/>
    </location>
</feature>
<feature type="region of interest" description="Disordered" evidence="3">
    <location>
        <begin position="362"/>
        <end position="384"/>
    </location>
</feature>
<feature type="compositionally biased region" description="Acidic residues" evidence="3">
    <location>
        <begin position="9"/>
        <end position="19"/>
    </location>
</feature>
<feature type="compositionally biased region" description="Acidic residues" evidence="3">
    <location>
        <begin position="375"/>
        <end position="384"/>
    </location>
</feature>
<feature type="modified residue" description="Phosphoserine" evidence="2">
    <location>
        <position position="354"/>
    </location>
</feature>
<feature type="modified residue" description="Phosphoserine" evidence="2">
    <location>
        <position position="383"/>
    </location>
</feature>
<proteinExistence type="evidence at transcript level"/>
<protein>
    <recommendedName>
        <fullName>WD repeat-containing protein 55</fullName>
    </recommendedName>
</protein>
<evidence type="ECO:0000250" key="1"/>
<evidence type="ECO:0000250" key="2">
    <source>
        <dbReference type="UniProtKB" id="Q9H6Y2"/>
    </source>
</evidence>
<evidence type="ECO:0000256" key="3">
    <source>
        <dbReference type="SAM" id="MobiDB-lite"/>
    </source>
</evidence>
<evidence type="ECO:0000305" key="4"/>
<keyword id="KW-0963">Cytoplasm</keyword>
<keyword id="KW-0539">Nucleus</keyword>
<keyword id="KW-0597">Phosphoprotein</keyword>
<keyword id="KW-1185">Reference proteome</keyword>
<keyword id="KW-0677">Repeat</keyword>
<keyword id="KW-0698">rRNA processing</keyword>
<keyword id="KW-0853">WD repeat</keyword>
<comment type="function">
    <text evidence="1">Nucleolar protein that acts as a modulator of rRNA synthesis. Plays a central role during organogenesis (By similarity).</text>
</comment>
<comment type="subcellular location">
    <subcellularLocation>
        <location evidence="1">Nucleus</location>
        <location evidence="1">Nucleolus</location>
    </subcellularLocation>
    <subcellularLocation>
        <location evidence="1">Cytoplasm</location>
    </subcellularLocation>
</comment>
<comment type="similarity">
    <text evidence="4">Belongs to the WD repeat WDR55 family.</text>
</comment>
<name>WDR55_RAT</name>
<gene>
    <name type="primary">Wdr55</name>
</gene>
<dbReference type="EMBL" id="CH473974">
    <property type="protein sequence ID" value="EDL76316.1"/>
    <property type="molecule type" value="Genomic_DNA"/>
</dbReference>
<dbReference type="EMBL" id="BC127460">
    <property type="protein sequence ID" value="AAI27461.1"/>
    <property type="molecule type" value="mRNA"/>
</dbReference>
<dbReference type="RefSeq" id="NP_001017932.1">
    <property type="nucleotide sequence ID" value="NM_001017932.2"/>
</dbReference>
<dbReference type="SMR" id="A1L112"/>
<dbReference type="BioGRID" id="258736">
    <property type="interactions" value="1"/>
</dbReference>
<dbReference type="FunCoup" id="A1L112">
    <property type="interactions" value="2197"/>
</dbReference>
<dbReference type="STRING" id="10116.ENSRNOP00000044213"/>
<dbReference type="iPTMnet" id="A1L112"/>
<dbReference type="PhosphoSitePlus" id="A1L112"/>
<dbReference type="jPOST" id="A1L112"/>
<dbReference type="PaxDb" id="10116-ENSRNOP00000044213"/>
<dbReference type="PeptideAtlas" id="A1L112"/>
<dbReference type="GeneID" id="307494"/>
<dbReference type="KEGG" id="rno:307494"/>
<dbReference type="UCSC" id="RGD:1305640">
    <property type="organism name" value="rat"/>
</dbReference>
<dbReference type="AGR" id="RGD:1305640"/>
<dbReference type="CTD" id="54853"/>
<dbReference type="RGD" id="1305640">
    <property type="gene designation" value="Wdr55"/>
</dbReference>
<dbReference type="eggNOG" id="KOG2444">
    <property type="taxonomic scope" value="Eukaryota"/>
</dbReference>
<dbReference type="HOGENOM" id="CLU_328704_0_0_1"/>
<dbReference type="InParanoid" id="A1L112"/>
<dbReference type="OrthoDB" id="26111at9989"/>
<dbReference type="PRO" id="PR:A1L112"/>
<dbReference type="Proteomes" id="UP000002494">
    <property type="component" value="Unplaced"/>
</dbReference>
<dbReference type="Proteomes" id="UP000234681">
    <property type="component" value="Chromosome 18"/>
</dbReference>
<dbReference type="GO" id="GO:0005737">
    <property type="term" value="C:cytoplasm"/>
    <property type="evidence" value="ECO:0007669"/>
    <property type="project" value="UniProtKB-SubCell"/>
</dbReference>
<dbReference type="GO" id="GO:0005730">
    <property type="term" value="C:nucleolus"/>
    <property type="evidence" value="ECO:0000250"/>
    <property type="project" value="UniProtKB"/>
</dbReference>
<dbReference type="GO" id="GO:0006364">
    <property type="term" value="P:rRNA processing"/>
    <property type="evidence" value="ECO:0000250"/>
    <property type="project" value="UniProtKB"/>
</dbReference>
<dbReference type="FunFam" id="2.130.10.10:FF:000333">
    <property type="entry name" value="WD repeat-containing protein 55"/>
    <property type="match status" value="1"/>
</dbReference>
<dbReference type="FunFam" id="2.130.10.10:FF:000389">
    <property type="entry name" value="WD repeat-containing protein 55"/>
    <property type="match status" value="1"/>
</dbReference>
<dbReference type="Gene3D" id="2.130.10.10">
    <property type="entry name" value="YVTN repeat-like/Quinoprotein amine dehydrogenase"/>
    <property type="match status" value="2"/>
</dbReference>
<dbReference type="InterPro" id="IPR015943">
    <property type="entry name" value="WD40/YVTN_repeat-like_dom_sf"/>
</dbReference>
<dbReference type="InterPro" id="IPR019775">
    <property type="entry name" value="WD40_repeat_CS"/>
</dbReference>
<dbReference type="InterPro" id="IPR036322">
    <property type="entry name" value="WD40_repeat_dom_sf"/>
</dbReference>
<dbReference type="InterPro" id="IPR001680">
    <property type="entry name" value="WD40_rpt"/>
</dbReference>
<dbReference type="InterPro" id="IPR017422">
    <property type="entry name" value="WDR55"/>
</dbReference>
<dbReference type="InterPro" id="IPR050505">
    <property type="entry name" value="WDR55_POC1"/>
</dbReference>
<dbReference type="PANTHER" id="PTHR44019">
    <property type="entry name" value="WD REPEAT-CONTAINING PROTEIN 55"/>
    <property type="match status" value="1"/>
</dbReference>
<dbReference type="PANTHER" id="PTHR44019:SF20">
    <property type="entry name" value="WD REPEAT-CONTAINING PROTEIN 55"/>
    <property type="match status" value="1"/>
</dbReference>
<dbReference type="Pfam" id="PF24796">
    <property type="entry name" value="WDR55"/>
    <property type="match status" value="1"/>
</dbReference>
<dbReference type="PIRSF" id="PIRSF038169">
    <property type="entry name" value="WD_repeat_p55"/>
    <property type="match status" value="1"/>
</dbReference>
<dbReference type="SMART" id="SM00320">
    <property type="entry name" value="WD40"/>
    <property type="match status" value="6"/>
</dbReference>
<dbReference type="SUPFAM" id="SSF50978">
    <property type="entry name" value="WD40 repeat-like"/>
    <property type="match status" value="1"/>
</dbReference>
<dbReference type="PROSITE" id="PS00678">
    <property type="entry name" value="WD_REPEATS_1"/>
    <property type="match status" value="1"/>
</dbReference>
<dbReference type="PROSITE" id="PS50082">
    <property type="entry name" value="WD_REPEATS_2"/>
    <property type="match status" value="2"/>
</dbReference>
<dbReference type="PROSITE" id="PS50294">
    <property type="entry name" value="WD_REPEATS_REGION"/>
    <property type="match status" value="1"/>
</dbReference>
<accession>A1L112</accession>
<reference key="1">
    <citation type="submission" date="2005-07" db="EMBL/GenBank/DDBJ databases">
        <authorList>
            <person name="Mural R.J."/>
            <person name="Adams M.D."/>
            <person name="Myers E.W."/>
            <person name="Smith H.O."/>
            <person name="Venter J.C."/>
        </authorList>
    </citation>
    <scope>NUCLEOTIDE SEQUENCE [LARGE SCALE GENOMIC DNA]</scope>
    <source>
        <strain>Brown Norway</strain>
    </source>
</reference>
<reference key="2">
    <citation type="journal article" date="2004" name="Genome Res.">
        <title>The status, quality, and expansion of the NIH full-length cDNA project: the Mammalian Gene Collection (MGC).</title>
        <authorList>
            <consortium name="The MGC Project Team"/>
        </authorList>
    </citation>
    <scope>NUCLEOTIDE SEQUENCE [LARGE SCALE MRNA]</scope>
    <source>
        <tissue>Brain</tissue>
    </source>
</reference>
<organism>
    <name type="scientific">Rattus norvegicus</name>
    <name type="common">Rat</name>
    <dbReference type="NCBI Taxonomy" id="10116"/>
    <lineage>
        <taxon>Eukaryota</taxon>
        <taxon>Metazoa</taxon>
        <taxon>Chordata</taxon>
        <taxon>Craniata</taxon>
        <taxon>Vertebrata</taxon>
        <taxon>Euteleostomi</taxon>
        <taxon>Mammalia</taxon>
        <taxon>Eutheria</taxon>
        <taxon>Euarchontoglires</taxon>
        <taxon>Glires</taxon>
        <taxon>Rodentia</taxon>
        <taxon>Myomorpha</taxon>
        <taxon>Muroidea</taxon>
        <taxon>Muridae</taxon>
        <taxon>Murinae</taxon>
        <taxon>Rattus</taxon>
    </lineage>
</organism>
<sequence length="384" mass="42142">MDPTCQESPAEDSNNEEDLDSTKAAPRIRDTPEDIVLEAPASGLAFHPTRDLLAAGDVDGDVFVFAYSCQEGETKELWSSGHHLKSCRAVVFSEDGQKLVTVSKDKAIHVLDVEQGQLERRISKAHSAPINSLLLVDENVLVTGDDTGGIRLWDQRKEGPLMDMRQHEEYIADMALDPAKKLLLTASGDGCLGVFNIKRRRFELLSEPQSGDLTSVALMKYGKKVACGSSEGTIYLFNWNGFGATSDRFALRAESIDCMVPVTENLLCTGSTDGIIRAVNILPNRVVGTVGQHAGEPVEELALSHCGHFLASSGHDQRLKFWDMTQLRTVVVDDYRRRKKKGGPLRALSSKAWSTDDFFAGLREDEEEAKAPEEVSGESDDDSD</sequence>